<keyword id="KW-0106">Calcium</keyword>
<keyword id="KW-1015">Disulfide bond</keyword>
<keyword id="KW-0325">Glycoprotein</keyword>
<keyword id="KW-0349">Heme</keyword>
<keyword id="KW-0376">Hydrogen peroxide</keyword>
<keyword id="KW-0408">Iron</keyword>
<keyword id="KW-0439">Lignin degradation</keyword>
<keyword id="KW-0464">Manganese</keyword>
<keyword id="KW-0479">Metal-binding</keyword>
<keyword id="KW-0560">Oxidoreductase</keyword>
<keyword id="KW-0575">Peroxidase</keyword>
<keyword id="KW-0964">Secreted</keyword>
<keyword id="KW-0732">Signal</keyword>
<name>PEM3_PHLRA</name>
<evidence type="ECO:0000250" key="1"/>
<evidence type="ECO:0000255" key="2"/>
<evidence type="ECO:0000255" key="3">
    <source>
        <dbReference type="PROSITE-ProRule" id="PRU00297"/>
    </source>
</evidence>
<evidence type="ECO:0000255" key="4">
    <source>
        <dbReference type="PROSITE-ProRule" id="PRU10012"/>
    </source>
</evidence>
<evidence type="ECO:0000256" key="5">
    <source>
        <dbReference type="SAM" id="MobiDB-lite"/>
    </source>
</evidence>
<evidence type="ECO:0000269" key="6">
    <source ref="2"/>
</evidence>
<evidence type="ECO:0000305" key="7"/>
<accession>Q96TS6</accession>
<feature type="signal peptide" evidence="2">
    <location>
        <begin position="1"/>
        <end position="18"/>
    </location>
</feature>
<feature type="propeptide" id="PRO_0000391465" evidence="1">
    <location>
        <begin position="19"/>
        <end position="23"/>
    </location>
</feature>
<feature type="chain" id="PRO_5000067443" description="Manganese peroxidase 3">
    <location>
        <begin position="24"/>
        <end position="362"/>
    </location>
</feature>
<feature type="region of interest" description="Disordered" evidence="5">
    <location>
        <begin position="341"/>
        <end position="362"/>
    </location>
</feature>
<feature type="active site" description="Proton acceptor" evidence="3 4">
    <location>
        <position position="71"/>
    </location>
</feature>
<feature type="binding site" evidence="1">
    <location>
        <position position="60"/>
    </location>
    <ligand>
        <name>Mn(2+)</name>
        <dbReference type="ChEBI" id="CHEBI:29035"/>
    </ligand>
</feature>
<feature type="binding site" evidence="1">
    <location>
        <position position="64"/>
    </location>
    <ligand>
        <name>Mn(2+)</name>
        <dbReference type="ChEBI" id="CHEBI:29035"/>
    </ligand>
</feature>
<feature type="binding site" evidence="3">
    <location>
        <position position="72"/>
    </location>
    <ligand>
        <name>Ca(2+)</name>
        <dbReference type="ChEBI" id="CHEBI:29108"/>
        <label>1</label>
    </ligand>
</feature>
<feature type="binding site" evidence="3">
    <location>
        <position position="90"/>
    </location>
    <ligand>
        <name>Ca(2+)</name>
        <dbReference type="ChEBI" id="CHEBI:29108"/>
        <label>1</label>
    </ligand>
</feature>
<feature type="binding site" evidence="3">
    <location>
        <position position="92"/>
    </location>
    <ligand>
        <name>Ca(2+)</name>
        <dbReference type="ChEBI" id="CHEBI:29108"/>
        <label>1</label>
    </ligand>
</feature>
<feature type="binding site" evidence="3">
    <location>
        <position position="94"/>
    </location>
    <ligand>
        <name>Ca(2+)</name>
        <dbReference type="ChEBI" id="CHEBI:29108"/>
        <label>1</label>
    </ligand>
</feature>
<feature type="binding site" description="axial binding residue" evidence="3">
    <location>
        <position position="200"/>
    </location>
    <ligand>
        <name>heme b</name>
        <dbReference type="ChEBI" id="CHEBI:60344"/>
    </ligand>
    <ligandPart>
        <name>Fe</name>
        <dbReference type="ChEBI" id="CHEBI:18248"/>
    </ligandPart>
</feature>
<feature type="binding site" evidence="3">
    <location>
        <position position="201"/>
    </location>
    <ligand>
        <name>Ca(2+)</name>
        <dbReference type="ChEBI" id="CHEBI:29108"/>
        <label>2</label>
    </ligand>
</feature>
<feature type="binding site" evidence="1">
    <location>
        <position position="206"/>
    </location>
    <ligand>
        <name>Mn(2+)</name>
        <dbReference type="ChEBI" id="CHEBI:29035"/>
    </ligand>
</feature>
<feature type="binding site" evidence="3">
    <location>
        <position position="218"/>
    </location>
    <ligand>
        <name>Ca(2+)</name>
        <dbReference type="ChEBI" id="CHEBI:29108"/>
        <label>2</label>
    </ligand>
</feature>
<feature type="binding site" evidence="3">
    <location>
        <position position="220"/>
    </location>
    <ligand>
        <name>Ca(2+)</name>
        <dbReference type="ChEBI" id="CHEBI:29108"/>
        <label>2</label>
    </ligand>
</feature>
<feature type="binding site" evidence="3">
    <location>
        <position position="223"/>
    </location>
    <ligand>
        <name>Ca(2+)</name>
        <dbReference type="ChEBI" id="CHEBI:29108"/>
        <label>2</label>
    </ligand>
</feature>
<feature type="binding site" evidence="3">
    <location>
        <position position="225"/>
    </location>
    <ligand>
        <name>Ca(2+)</name>
        <dbReference type="ChEBI" id="CHEBI:29108"/>
        <label>2</label>
    </ligand>
</feature>
<feature type="site" description="Transition state stabilizer" evidence="3">
    <location>
        <position position="67"/>
    </location>
</feature>
<feature type="glycosylation site" description="N-linked (GlcNAc...) asparagine" evidence="2">
    <location>
        <position position="126"/>
    </location>
</feature>
<feature type="disulfide bond" evidence="3">
    <location>
        <begin position="26"/>
        <end position="39"/>
    </location>
</feature>
<feature type="disulfide bond" evidence="3">
    <location>
        <begin position="38"/>
        <end position="309"/>
    </location>
</feature>
<feature type="disulfide bond" evidence="3">
    <location>
        <begin position="58"/>
        <end position="144"/>
    </location>
</feature>
<feature type="disulfide bond" evidence="3">
    <location>
        <begin position="273"/>
        <end position="338"/>
    </location>
</feature>
<reference key="1">
    <citation type="journal article" date="2005" name="Fungal Genet. Biol.">
        <title>The two manganese peroxidases Pr-MnP2 and Pr-MnP3 of Phlebia radiata, a lignin-degrading basidiomycete, are phylogenetically and structurally divergent.</title>
        <authorList>
            <person name="Hilden K."/>
            <person name="Martinez A.T."/>
            <person name="Hatakka A."/>
            <person name="Lundell T."/>
        </authorList>
    </citation>
    <scope>NUCLEOTIDE SEQUENCE [GENOMIC DNA / MRNA]</scope>
    <source>
        <strain>ATCC 64658 / 79</strain>
    </source>
</reference>
<reference key="2">
    <citation type="journal article" date="1996" name="Appl. Microbiol. Biotechnol.">
        <title>Manganese and malonate are individual regulators for the production of lignin and manganese peroxidase isozymes and in the degradation of lignin by Phlebia radiata.</title>
        <authorList>
            <person name="Moilanen A.-M."/>
            <person name="Lundell T."/>
            <person name="Vares T."/>
            <person name="Hatakka A."/>
        </authorList>
    </citation>
    <scope>FUNCTION</scope>
    <scope>INDUCTION</scope>
</reference>
<proteinExistence type="evidence at transcript level"/>
<protein>
    <recommendedName>
        <fullName>Manganese peroxidase 3</fullName>
        <shortName>MnP3</shortName>
        <ecNumber>1.11.1.13</ecNumber>
    </recommendedName>
    <alternativeName>
        <fullName>Manganese peroxidase isozyme 3</fullName>
    </alternativeName>
</protein>
<gene>
    <name type="primary">mnp3</name>
</gene>
<sequence>MAFKQLLTAISIVSVANAALTRRVACPDGVNTATNAVCCSLFAVRDLIQDQLFDGGECGEEVHESLRLTFHDAIGISPTIASTGVFGGGGADGSIAIFAEIETNFHANNGVDEIIGEQAPFIQMTNMTTADFIQFAGAVGVSNCPGAPALPVFVGRPDATQPAPDKTVPEPFDTVDSILARFADAGGFSSAEVVALLASHTIAAADHVDPSIPGTPFDSTPEIFDTQFFIETQLRGILFPGTGGNQGEVESPLHGEIRLQSDSELARDSRTACEWQSFVNNQAKIQSAFKAAFRKMTILGHSESSLIECSEVIQTPPALEGNAHLPAGQTMNDIEQACATTPFPSLSADPGPATSVAPVPPS</sequence>
<organism>
    <name type="scientific">Phlebia radiata</name>
    <name type="common">White-rot fungus</name>
    <dbReference type="NCBI Taxonomy" id="5308"/>
    <lineage>
        <taxon>Eukaryota</taxon>
        <taxon>Fungi</taxon>
        <taxon>Dikarya</taxon>
        <taxon>Basidiomycota</taxon>
        <taxon>Agaricomycotina</taxon>
        <taxon>Agaricomycetes</taxon>
        <taxon>Polyporales</taxon>
        <taxon>Meruliaceae</taxon>
        <taxon>Phlebia</taxon>
    </lineage>
</organism>
<comment type="function">
    <text evidence="6">Catalyzes the oxidation of Mn(2+) to Mn(3+). The latter, acting as a diffusible redox mediator, is capable of oxidizing a variety of lignin compounds. This isozyme is also able to oxidize phenols and amines in the absence of Mn(2+), similar to versatile peroxidases.</text>
</comment>
<comment type="catalytic activity">
    <reaction>
        <text>2 Mn(2+) + H2O2 + 2 H(+) = 2 Mn(3+) + 2 H2O</text>
        <dbReference type="Rhea" id="RHEA:22776"/>
        <dbReference type="ChEBI" id="CHEBI:15377"/>
        <dbReference type="ChEBI" id="CHEBI:15378"/>
        <dbReference type="ChEBI" id="CHEBI:16240"/>
        <dbReference type="ChEBI" id="CHEBI:29035"/>
        <dbReference type="ChEBI" id="CHEBI:29041"/>
        <dbReference type="EC" id="1.11.1.13"/>
    </reaction>
</comment>
<comment type="cofactor">
    <cofactor evidence="3">
        <name>heme b</name>
        <dbReference type="ChEBI" id="CHEBI:60344"/>
    </cofactor>
    <text evidence="3">Binds 1 heme b (iron(II)-protoporphyrin IX) group per subunit.</text>
</comment>
<comment type="cofactor">
    <cofactor evidence="3">
        <name>Ca(2+)</name>
        <dbReference type="ChEBI" id="CHEBI:29108"/>
    </cofactor>
    <text evidence="3">Binds 2 calcium ions per subunit.</text>
</comment>
<comment type="subcellular location">
    <subcellularLocation>
        <location>Secreted</location>
    </subcellularLocation>
</comment>
<comment type="induction">
    <text evidence="6">By a combination of high manganese and malonate levels.</text>
</comment>
<comment type="similarity">
    <text evidence="7">Belongs to the peroxidase family. Ligninase subfamily.</text>
</comment>
<dbReference type="EC" id="1.11.1.13"/>
<dbReference type="EMBL" id="AJ310930">
    <property type="protein sequence ID" value="CAC84573.1"/>
    <property type="molecule type" value="mRNA"/>
</dbReference>
<dbReference type="EMBL" id="AJ566200">
    <property type="protein sequence ID" value="CAD92855.1"/>
    <property type="molecule type" value="Genomic_DNA"/>
</dbReference>
<dbReference type="SMR" id="Q96TS6"/>
<dbReference type="CAZy" id="AA2">
    <property type="family name" value="Auxiliary Activities 2"/>
</dbReference>
<dbReference type="PeroxiBase" id="2294">
    <property type="entry name" value="PrCIIBB03"/>
</dbReference>
<dbReference type="GlyCosmos" id="Q96TS6">
    <property type="glycosylation" value="1 site, No reported glycans"/>
</dbReference>
<dbReference type="KEGG" id="ag:CAC84573"/>
<dbReference type="GO" id="GO:0005576">
    <property type="term" value="C:extracellular region"/>
    <property type="evidence" value="ECO:0007669"/>
    <property type="project" value="UniProtKB-SubCell"/>
</dbReference>
<dbReference type="GO" id="GO:0020037">
    <property type="term" value="F:heme binding"/>
    <property type="evidence" value="ECO:0007669"/>
    <property type="project" value="InterPro"/>
</dbReference>
<dbReference type="GO" id="GO:0016689">
    <property type="term" value="F:manganese peroxidase activity"/>
    <property type="evidence" value="ECO:0007669"/>
    <property type="project" value="UniProtKB-EC"/>
</dbReference>
<dbReference type="GO" id="GO:0046872">
    <property type="term" value="F:metal ion binding"/>
    <property type="evidence" value="ECO:0007669"/>
    <property type="project" value="UniProtKB-KW"/>
</dbReference>
<dbReference type="GO" id="GO:0034599">
    <property type="term" value="P:cellular response to oxidative stress"/>
    <property type="evidence" value="ECO:0007669"/>
    <property type="project" value="InterPro"/>
</dbReference>
<dbReference type="GO" id="GO:0042744">
    <property type="term" value="P:hydrogen peroxide catabolic process"/>
    <property type="evidence" value="ECO:0007669"/>
    <property type="project" value="UniProtKB-KW"/>
</dbReference>
<dbReference type="GO" id="GO:0046274">
    <property type="term" value="P:lignin catabolic process"/>
    <property type="evidence" value="ECO:0007669"/>
    <property type="project" value="UniProtKB-KW"/>
</dbReference>
<dbReference type="GO" id="GO:0000302">
    <property type="term" value="P:response to reactive oxygen species"/>
    <property type="evidence" value="ECO:0007669"/>
    <property type="project" value="TreeGrafter"/>
</dbReference>
<dbReference type="CDD" id="cd00692">
    <property type="entry name" value="ligninase"/>
    <property type="match status" value="1"/>
</dbReference>
<dbReference type="Gene3D" id="1.10.520.10">
    <property type="match status" value="1"/>
</dbReference>
<dbReference type="Gene3D" id="1.10.420.10">
    <property type="entry name" value="Peroxidase, domain 2"/>
    <property type="match status" value="1"/>
</dbReference>
<dbReference type="InterPro" id="IPR044831">
    <property type="entry name" value="Ccp1-like"/>
</dbReference>
<dbReference type="InterPro" id="IPR002016">
    <property type="entry name" value="Haem_peroxidase"/>
</dbReference>
<dbReference type="InterPro" id="IPR010255">
    <property type="entry name" value="Haem_peroxidase_sf"/>
</dbReference>
<dbReference type="InterPro" id="IPR001621">
    <property type="entry name" value="Ligninase"/>
</dbReference>
<dbReference type="InterPro" id="IPR024589">
    <property type="entry name" value="Ligninase_C"/>
</dbReference>
<dbReference type="InterPro" id="IPR019794">
    <property type="entry name" value="Peroxidases_AS"/>
</dbReference>
<dbReference type="InterPro" id="IPR019793">
    <property type="entry name" value="Peroxidases_heam-ligand_BS"/>
</dbReference>
<dbReference type="PANTHER" id="PTHR31356:SF66">
    <property type="entry name" value="CATALASE-PEROXIDASE"/>
    <property type="match status" value="1"/>
</dbReference>
<dbReference type="PANTHER" id="PTHR31356">
    <property type="entry name" value="THYLAKOID LUMENAL 29 KDA PROTEIN, CHLOROPLASTIC-RELATED"/>
    <property type="match status" value="1"/>
</dbReference>
<dbReference type="Pfam" id="PF00141">
    <property type="entry name" value="peroxidase"/>
    <property type="match status" value="1"/>
</dbReference>
<dbReference type="Pfam" id="PF11895">
    <property type="entry name" value="Peroxidase_ext"/>
    <property type="match status" value="1"/>
</dbReference>
<dbReference type="PRINTS" id="PR00462">
    <property type="entry name" value="LIGNINASE"/>
</dbReference>
<dbReference type="PRINTS" id="PR00458">
    <property type="entry name" value="PEROXIDASE"/>
</dbReference>
<dbReference type="SUPFAM" id="SSF48113">
    <property type="entry name" value="Heme-dependent peroxidases"/>
    <property type="match status" value="1"/>
</dbReference>
<dbReference type="PROSITE" id="PS00435">
    <property type="entry name" value="PEROXIDASE_1"/>
    <property type="match status" value="1"/>
</dbReference>
<dbReference type="PROSITE" id="PS00436">
    <property type="entry name" value="PEROXIDASE_2"/>
    <property type="match status" value="1"/>
</dbReference>
<dbReference type="PROSITE" id="PS50873">
    <property type="entry name" value="PEROXIDASE_4"/>
    <property type="match status" value="1"/>
</dbReference>